<protein>
    <recommendedName>
        <fullName evidence="1">RNA-binding protein Hfq</fullName>
    </recommendedName>
</protein>
<reference key="1">
    <citation type="journal article" date="2008" name="J. Bacteriol.">
        <title>The complete genome sequence of Escherichia coli DH10B: insights into the biology of a laboratory workhorse.</title>
        <authorList>
            <person name="Durfee T."/>
            <person name="Nelson R."/>
            <person name="Baldwin S."/>
            <person name="Plunkett G. III"/>
            <person name="Burland V."/>
            <person name="Mau B."/>
            <person name="Petrosino J.F."/>
            <person name="Qin X."/>
            <person name="Muzny D.M."/>
            <person name="Ayele M."/>
            <person name="Gibbs R.A."/>
            <person name="Csorgo B."/>
            <person name="Posfai G."/>
            <person name="Weinstock G.M."/>
            <person name="Blattner F.R."/>
        </authorList>
    </citation>
    <scope>NUCLEOTIDE SEQUENCE [LARGE SCALE GENOMIC DNA]</scope>
    <source>
        <strain>K12 / DH10B</strain>
    </source>
</reference>
<evidence type="ECO:0000255" key="1">
    <source>
        <dbReference type="HAMAP-Rule" id="MF_00436"/>
    </source>
</evidence>
<evidence type="ECO:0000255" key="2">
    <source>
        <dbReference type="PROSITE-ProRule" id="PRU01346"/>
    </source>
</evidence>
<evidence type="ECO:0000256" key="3">
    <source>
        <dbReference type="SAM" id="MobiDB-lite"/>
    </source>
</evidence>
<proteinExistence type="inferred from homology"/>
<feature type="chain" id="PRO_1000190323" description="RNA-binding protein Hfq">
    <location>
        <begin position="1"/>
        <end position="102"/>
    </location>
</feature>
<feature type="domain" description="Sm" evidence="2">
    <location>
        <begin position="9"/>
        <end position="68"/>
    </location>
</feature>
<feature type="region of interest" description="Disordered" evidence="3">
    <location>
        <begin position="63"/>
        <end position="102"/>
    </location>
</feature>
<feature type="compositionally biased region" description="Polar residues" evidence="3">
    <location>
        <begin position="70"/>
        <end position="96"/>
    </location>
</feature>
<gene>
    <name evidence="1" type="primary">hfq</name>
    <name type="ordered locus">ECDH10B_4367</name>
</gene>
<accession>B1XDS3</accession>
<sequence>MAKGQSLQDPFLNALRRERVPVSIYLVNGIKLQGQIESFDQFVILLKNTVSQMVYKHAISTVVPSRPVSHHSNNAGGGTSSNYHHGSSAQNTSAQQDSEETE</sequence>
<name>HFQ_ECODH</name>
<comment type="function">
    <text evidence="1">RNA chaperone that binds small regulatory RNA (sRNAs) and mRNAs to facilitate mRNA translational regulation in response to envelope stress, environmental stress and changes in metabolite concentrations. Also binds with high specificity to tRNAs.</text>
</comment>
<comment type="subunit">
    <text evidence="1">Homohexamer.</text>
</comment>
<comment type="similarity">
    <text evidence="1">Belongs to the Hfq family.</text>
</comment>
<keyword id="KW-0694">RNA-binding</keyword>
<keyword id="KW-0346">Stress response</keyword>
<organism>
    <name type="scientific">Escherichia coli (strain K12 / DH10B)</name>
    <dbReference type="NCBI Taxonomy" id="316385"/>
    <lineage>
        <taxon>Bacteria</taxon>
        <taxon>Pseudomonadati</taxon>
        <taxon>Pseudomonadota</taxon>
        <taxon>Gammaproteobacteria</taxon>
        <taxon>Enterobacterales</taxon>
        <taxon>Enterobacteriaceae</taxon>
        <taxon>Escherichia</taxon>
    </lineage>
</organism>
<dbReference type="EMBL" id="CP000948">
    <property type="protein sequence ID" value="ACB05160.1"/>
    <property type="molecule type" value="Genomic_DNA"/>
</dbReference>
<dbReference type="RefSeq" id="WP_001051883.1">
    <property type="nucleotide sequence ID" value="NC_010473.1"/>
</dbReference>
<dbReference type="SMR" id="B1XDS3"/>
<dbReference type="GeneID" id="93777649"/>
<dbReference type="KEGG" id="ecd:ECDH10B_4367"/>
<dbReference type="HOGENOM" id="CLU_113688_2_1_6"/>
<dbReference type="GO" id="GO:0005829">
    <property type="term" value="C:cytosol"/>
    <property type="evidence" value="ECO:0007669"/>
    <property type="project" value="TreeGrafter"/>
</dbReference>
<dbReference type="GO" id="GO:0003723">
    <property type="term" value="F:RNA binding"/>
    <property type="evidence" value="ECO:0007669"/>
    <property type="project" value="UniProtKB-UniRule"/>
</dbReference>
<dbReference type="GO" id="GO:0006355">
    <property type="term" value="P:regulation of DNA-templated transcription"/>
    <property type="evidence" value="ECO:0007669"/>
    <property type="project" value="InterPro"/>
</dbReference>
<dbReference type="GO" id="GO:0043487">
    <property type="term" value="P:regulation of RNA stability"/>
    <property type="evidence" value="ECO:0007669"/>
    <property type="project" value="TreeGrafter"/>
</dbReference>
<dbReference type="GO" id="GO:0045974">
    <property type="term" value="P:regulation of translation, ncRNA-mediated"/>
    <property type="evidence" value="ECO:0007669"/>
    <property type="project" value="TreeGrafter"/>
</dbReference>
<dbReference type="CDD" id="cd01716">
    <property type="entry name" value="Hfq"/>
    <property type="match status" value="1"/>
</dbReference>
<dbReference type="FunFam" id="2.30.30.100:FF:000001">
    <property type="entry name" value="RNA-binding protein Hfq"/>
    <property type="match status" value="1"/>
</dbReference>
<dbReference type="Gene3D" id="2.30.30.100">
    <property type="match status" value="1"/>
</dbReference>
<dbReference type="HAMAP" id="MF_00436">
    <property type="entry name" value="Hfq"/>
    <property type="match status" value="1"/>
</dbReference>
<dbReference type="InterPro" id="IPR005001">
    <property type="entry name" value="Hfq"/>
</dbReference>
<dbReference type="InterPro" id="IPR010920">
    <property type="entry name" value="LSM_dom_sf"/>
</dbReference>
<dbReference type="InterPro" id="IPR047575">
    <property type="entry name" value="Sm"/>
</dbReference>
<dbReference type="NCBIfam" id="TIGR02383">
    <property type="entry name" value="Hfq"/>
    <property type="match status" value="1"/>
</dbReference>
<dbReference type="NCBIfam" id="NF001602">
    <property type="entry name" value="PRK00395.1"/>
    <property type="match status" value="1"/>
</dbReference>
<dbReference type="PANTHER" id="PTHR34772">
    <property type="entry name" value="RNA-BINDING PROTEIN HFQ"/>
    <property type="match status" value="1"/>
</dbReference>
<dbReference type="PANTHER" id="PTHR34772:SF1">
    <property type="entry name" value="RNA-BINDING PROTEIN HFQ"/>
    <property type="match status" value="1"/>
</dbReference>
<dbReference type="Pfam" id="PF17209">
    <property type="entry name" value="Hfq"/>
    <property type="match status" value="1"/>
</dbReference>
<dbReference type="SUPFAM" id="SSF50182">
    <property type="entry name" value="Sm-like ribonucleoproteins"/>
    <property type="match status" value="1"/>
</dbReference>
<dbReference type="PROSITE" id="PS52002">
    <property type="entry name" value="SM"/>
    <property type="match status" value="1"/>
</dbReference>